<proteinExistence type="evidence at protein level"/>
<gene>
    <name evidence="2" type="primary">IMPDH2</name>
</gene>
<comment type="function">
    <text evidence="1">Catalyzes the conversion of inosine 5'-phosphate (IMP) to xanthosine 5'-phosphate (XMP), the first committed and rate-limiting step in the de novo synthesis of guanine nucleotides, and therefore plays an important role in the regulation of cell growth. Could also have a single-stranded nucleic acid-binding activity and could play a role in RNA and/or DNA metabolism. It may also have a role in the development of malignancy and the growth progression of some tumors.</text>
</comment>
<comment type="catalytic activity">
    <reaction evidence="1">
        <text>IMP + NAD(+) + H2O = XMP + NADH + H(+)</text>
        <dbReference type="Rhea" id="RHEA:11708"/>
        <dbReference type="ChEBI" id="CHEBI:15377"/>
        <dbReference type="ChEBI" id="CHEBI:15378"/>
        <dbReference type="ChEBI" id="CHEBI:57464"/>
        <dbReference type="ChEBI" id="CHEBI:57540"/>
        <dbReference type="ChEBI" id="CHEBI:57945"/>
        <dbReference type="ChEBI" id="CHEBI:58053"/>
        <dbReference type="EC" id="1.1.1.205"/>
    </reaction>
</comment>
<comment type="cofactor">
    <cofactor>
        <name>K(+)</name>
        <dbReference type="ChEBI" id="CHEBI:29103"/>
    </cofactor>
</comment>
<comment type="activity regulation">
    <text evidence="2">Mycophenolic acid (MPA) is a non-competitive inhibitor that prevents formation of the closed enzyme conformation by binding to the same site as the amobile flap. In contrast, mizoribine monophosphate (MZP) is a competitive inhibitor that induces the closed conformation. MPA is a potent inhibitor of mammalian IMPDHs but a poor inhibitor of the bacterial enzymes. MZP is a more potent inhibitor of bacterial IMPDH.</text>
</comment>
<comment type="pathway">
    <text evidence="1">Purine metabolism; XMP biosynthesis via de novo pathway; XMP from IMP: step 1/1.</text>
</comment>
<comment type="subunit">
    <text evidence="1 3">Homotetramer (PubMed:8681386). Interacts with CLOCK; in a circadian manner. Interacts with ANKRD9; leading to its ubiquitination and degradation by the proteasome (By similarity).</text>
</comment>
<comment type="subcellular location">
    <subcellularLocation>
        <location evidence="1">Cytoplasm</location>
    </subcellularLocation>
    <subcellularLocation>
        <location evidence="1">Nucleus</location>
    </subcellularLocation>
    <subcellularLocation>
        <location evidence="1">Cytoplasm</location>
        <location evidence="1">Cytosol</location>
    </subcellularLocation>
    <text evidence="1">Can form fiber-like subcellular structures termed 'cytoophidia' in response to intracellular guanine-nucleotide depletion.</text>
</comment>
<comment type="PTM">
    <text evidence="1">Acetylated by CLOCK in a circadian manner.</text>
</comment>
<comment type="PTM">
    <text evidence="1">Ubiquitinated leading to its degradation by the proteasome.</text>
</comment>
<comment type="similarity">
    <text evidence="2">Belongs to the IMPDH/GMPR family.</text>
</comment>
<protein>
    <recommendedName>
        <fullName evidence="2">Inosine-5'-monophosphate dehydrogenase 2</fullName>
        <shortName evidence="2">IMP dehydrogenase 2</shortName>
        <shortName evidence="2">IMPD 2</shortName>
        <shortName evidence="2">IMPDH 2</shortName>
        <ecNumber evidence="1">1.1.1.205</ecNumber>
    </recommendedName>
    <alternativeName>
        <fullName>IMPDH-II</fullName>
    </alternativeName>
</protein>
<reference key="1">
    <citation type="journal article" date="1988" name="J. Biol. Chem.">
        <title>Cloning and sequence analysis of the human and Chinese hamster inosine-5'-monophosphate dehydrogenase cDNAs.</title>
        <authorList>
            <person name="Collart F.R."/>
            <person name="Huberman E."/>
        </authorList>
    </citation>
    <scope>NUCLEOTIDE SEQUENCE [MRNA]</scope>
    <scope>PROTEIN SEQUENCE OF 336-370</scope>
</reference>
<reference key="2">
    <citation type="journal article" date="2011" name="Nat. Biotechnol.">
        <title>The genomic sequence of the Chinese hamster ovary (CHO)-K1 cell line.</title>
        <authorList>
            <person name="Xu X."/>
            <person name="Nagarajan H."/>
            <person name="Lewis N.E."/>
            <person name="Pan S."/>
            <person name="Cai Z."/>
            <person name="Liu X."/>
            <person name="Chen W."/>
            <person name="Xie M."/>
            <person name="Wang W."/>
            <person name="Hammond S."/>
            <person name="Andersen M.R."/>
            <person name="Neff N."/>
            <person name="Passarelli B."/>
            <person name="Koh W."/>
            <person name="Fan H.C."/>
            <person name="Wang J."/>
            <person name="Gui Y."/>
            <person name="Lee K.H."/>
            <person name="Betenbaugh M.J."/>
            <person name="Quake S.R."/>
            <person name="Famili I."/>
            <person name="Palsson B.O."/>
            <person name="Wang J."/>
        </authorList>
    </citation>
    <scope>NUCLEOTIDE SEQUENCE [LARGE SCALE GENOMIC DNA]</scope>
</reference>
<reference evidence="4" key="3">
    <citation type="journal article" date="1996" name="Cell">
        <title>Structure and mechanism of inosine monophosphate dehydrogenase in complex with the immunosuppressant mycophenolic acid.</title>
        <authorList>
            <person name="Sintchak M.D."/>
            <person name="Fleming M.A."/>
            <person name="Futer O."/>
            <person name="Raybuck S.A."/>
            <person name="Chambers S.P."/>
            <person name="Caron P.R."/>
            <person name="Murcko M.A."/>
            <person name="Wilson K.P."/>
        </authorList>
    </citation>
    <scope>X-RAY CRYSTALLOGRAPHY (2.6 ANGSTROMS) IN COMPLEX WITH SUBSTRATE AND THE INHIBITOR MYCOPHENOLIC ACID (MPA)</scope>
    <scope>MUTAGENESIS OF SER-275; SER-276; SER-329; CYS-331; THR-333; ASP-364; GLN-368 AND GLN-441</scope>
</reference>
<dbReference type="EC" id="1.1.1.205" evidence="1"/>
<dbReference type="EMBL" id="J04209">
    <property type="protein sequence ID" value="AAA36993.1"/>
    <property type="molecule type" value="mRNA"/>
</dbReference>
<dbReference type="EMBL" id="JH001800">
    <property type="protein sequence ID" value="EGW10487.1"/>
    <property type="molecule type" value="Genomic_DNA"/>
</dbReference>
<dbReference type="RefSeq" id="NP_001233751.1">
    <property type="nucleotide sequence ID" value="NM_001246822.1"/>
</dbReference>
<dbReference type="PDB" id="1JR1">
    <property type="method" value="X-ray"/>
    <property type="resolution" value="2.60 A"/>
    <property type="chains" value="A/B=1-514"/>
</dbReference>
<dbReference type="PDBsum" id="1JR1"/>
<dbReference type="SMR" id="P12269"/>
<dbReference type="FunCoup" id="P12269">
    <property type="interactions" value="2733"/>
</dbReference>
<dbReference type="STRING" id="10029.P12269"/>
<dbReference type="PaxDb" id="10029-NP_001233751.1"/>
<dbReference type="Ensembl" id="ENSCGRT00001002522.1">
    <property type="protein sequence ID" value="ENSCGRP00001002027.1"/>
    <property type="gene ID" value="ENSCGRG00001002016.1"/>
</dbReference>
<dbReference type="GeneID" id="100689398"/>
<dbReference type="KEGG" id="cge:100689398"/>
<dbReference type="CTD" id="3615"/>
<dbReference type="eggNOG" id="KOG2550">
    <property type="taxonomic scope" value="Eukaryota"/>
</dbReference>
<dbReference type="GeneTree" id="ENSGT00940000157726"/>
<dbReference type="InParanoid" id="P12269"/>
<dbReference type="OMA" id="PGSHCTT"/>
<dbReference type="OrthoDB" id="416622at2759"/>
<dbReference type="UniPathway" id="UPA00601">
    <property type="reaction ID" value="UER00295"/>
</dbReference>
<dbReference type="EvolutionaryTrace" id="P12269"/>
<dbReference type="PRO" id="PR:P12269"/>
<dbReference type="Proteomes" id="UP000001075">
    <property type="component" value="Unassembled WGS sequence"/>
</dbReference>
<dbReference type="Proteomes" id="UP000694386">
    <property type="component" value="Unplaced"/>
</dbReference>
<dbReference type="Proteomes" id="UP001108280">
    <property type="component" value="Chromosome 4"/>
</dbReference>
<dbReference type="GO" id="GO:0005737">
    <property type="term" value="C:cytoplasm"/>
    <property type="evidence" value="ECO:0000250"/>
    <property type="project" value="UniProtKB"/>
</dbReference>
<dbReference type="GO" id="GO:0005829">
    <property type="term" value="C:cytosol"/>
    <property type="evidence" value="ECO:0000250"/>
    <property type="project" value="UniProtKB"/>
</dbReference>
<dbReference type="GO" id="GO:0005634">
    <property type="term" value="C:nucleus"/>
    <property type="evidence" value="ECO:0000250"/>
    <property type="project" value="UniProtKB"/>
</dbReference>
<dbReference type="GO" id="GO:0003938">
    <property type="term" value="F:IMP dehydrogenase activity"/>
    <property type="evidence" value="ECO:0000250"/>
    <property type="project" value="UniProtKB"/>
</dbReference>
<dbReference type="GO" id="GO:0046872">
    <property type="term" value="F:metal ion binding"/>
    <property type="evidence" value="ECO:0007669"/>
    <property type="project" value="UniProtKB-UniRule"/>
</dbReference>
<dbReference type="GO" id="GO:0000166">
    <property type="term" value="F:nucleotide binding"/>
    <property type="evidence" value="ECO:0000250"/>
    <property type="project" value="UniProtKB"/>
</dbReference>
<dbReference type="GO" id="GO:0097294">
    <property type="term" value="P:'de novo' XMP biosynthetic process"/>
    <property type="evidence" value="ECO:0007669"/>
    <property type="project" value="Ensembl"/>
</dbReference>
<dbReference type="GO" id="GO:0071353">
    <property type="term" value="P:cellular response to interleukin-4"/>
    <property type="evidence" value="ECO:0007669"/>
    <property type="project" value="Ensembl"/>
</dbReference>
<dbReference type="GO" id="GO:0007623">
    <property type="term" value="P:circadian rhythm"/>
    <property type="evidence" value="ECO:0000250"/>
    <property type="project" value="UniProtKB"/>
</dbReference>
<dbReference type="GO" id="GO:0006177">
    <property type="term" value="P:GMP biosynthetic process"/>
    <property type="evidence" value="ECO:0007669"/>
    <property type="project" value="UniProtKB-UniRule"/>
</dbReference>
<dbReference type="GO" id="GO:0006183">
    <property type="term" value="P:GTP biosynthetic process"/>
    <property type="evidence" value="ECO:0000250"/>
    <property type="project" value="UniProtKB"/>
</dbReference>
<dbReference type="GO" id="GO:0046651">
    <property type="term" value="P:lymphocyte proliferation"/>
    <property type="evidence" value="ECO:0007669"/>
    <property type="project" value="Ensembl"/>
</dbReference>
<dbReference type="CDD" id="cd04601">
    <property type="entry name" value="CBS_pair_IMPDH"/>
    <property type="match status" value="1"/>
</dbReference>
<dbReference type="CDD" id="cd00381">
    <property type="entry name" value="IMPDH"/>
    <property type="match status" value="1"/>
</dbReference>
<dbReference type="FunFam" id="3.20.20.70:FF:000424">
    <property type="entry name" value="Inosine-5'-monophosphate dehydrogenase 2"/>
    <property type="match status" value="2"/>
</dbReference>
<dbReference type="Gene3D" id="3.20.20.70">
    <property type="entry name" value="Aldolase class I"/>
    <property type="match status" value="1"/>
</dbReference>
<dbReference type="HAMAP" id="MF_01964">
    <property type="entry name" value="IMPDH"/>
    <property type="match status" value="1"/>
</dbReference>
<dbReference type="InterPro" id="IPR013785">
    <property type="entry name" value="Aldolase_TIM"/>
</dbReference>
<dbReference type="InterPro" id="IPR000644">
    <property type="entry name" value="CBS_dom"/>
</dbReference>
<dbReference type="InterPro" id="IPR005990">
    <property type="entry name" value="IMP_DH"/>
</dbReference>
<dbReference type="InterPro" id="IPR015875">
    <property type="entry name" value="IMP_DH/GMP_Rdtase_CS"/>
</dbReference>
<dbReference type="InterPro" id="IPR001093">
    <property type="entry name" value="IMP_DH_GMPRt"/>
</dbReference>
<dbReference type="NCBIfam" id="TIGR01302">
    <property type="entry name" value="IMP_dehydrog"/>
    <property type="match status" value="1"/>
</dbReference>
<dbReference type="PANTHER" id="PTHR11911:SF121">
    <property type="entry name" value="INOSINE-5'-MONOPHOSPHATE DEHYDROGENASE 2"/>
    <property type="match status" value="1"/>
</dbReference>
<dbReference type="PANTHER" id="PTHR11911">
    <property type="entry name" value="INOSINE-5-MONOPHOSPHATE DEHYDROGENASE RELATED"/>
    <property type="match status" value="1"/>
</dbReference>
<dbReference type="Pfam" id="PF00571">
    <property type="entry name" value="CBS"/>
    <property type="match status" value="2"/>
</dbReference>
<dbReference type="Pfam" id="PF00478">
    <property type="entry name" value="IMPDH"/>
    <property type="match status" value="1"/>
</dbReference>
<dbReference type="PIRSF" id="PIRSF000130">
    <property type="entry name" value="IMPDH"/>
    <property type="match status" value="1"/>
</dbReference>
<dbReference type="SMART" id="SM00116">
    <property type="entry name" value="CBS"/>
    <property type="match status" value="2"/>
</dbReference>
<dbReference type="SMART" id="SM01240">
    <property type="entry name" value="IMPDH"/>
    <property type="match status" value="1"/>
</dbReference>
<dbReference type="SUPFAM" id="SSF51412">
    <property type="entry name" value="Inosine monophosphate dehydrogenase (IMPDH)"/>
    <property type="match status" value="2"/>
</dbReference>
<dbReference type="PROSITE" id="PS51371">
    <property type="entry name" value="CBS"/>
    <property type="match status" value="2"/>
</dbReference>
<dbReference type="PROSITE" id="PS00487">
    <property type="entry name" value="IMP_DH_GMP_RED"/>
    <property type="match status" value="1"/>
</dbReference>
<name>IMDH2_CRIGR</name>
<sequence>MADYLISGGTSYVPDDGLTAQQLFNCGDGLTYNDFLILPGYIDFTADQVDLTSALTKKITLKTPLVSSPMDTVTEAGMAIAMALTGGIGFIHHNCTPEFQANEVRKVKKYEQGFITDPVVLSPKDRVRDVFEAKARHGFCGIPITDTGRMGSRLVGIISSRDIDFLKEEEHDRFLEEIMTKREDLVVAPAGITLKEANEILQRSKKGKLPIVNENDELVAIIARTDLKKNRDYPLASKDAKKQLLCGAAIGTHEDDKYRLDLLALAGVDVVVLDSSQGNSIFQINMIKYMKEKYPNLQVIGGNVVTAAQAKNLIDAGVDALRVGMGCGSICITQEVLACGRPQATAVYKVSEYARRFGVPVIADGGIQNVGHIAKALALGASTVMMGSLLAATTEAPGEYFFSDGIRLKKYRGMGSLDAMDKHLSSQNRYFSEADKIKVAQGVSGAVQDKGSIHKFVPYLIAGIQHSCQDIGAKSLTQVRAMMYSGELKFEKRTSSAQVEGGVHSLHSYEKRLF</sequence>
<feature type="chain" id="PRO_0000093672" description="Inosine-5'-monophosphate dehydrogenase 2">
    <location>
        <begin position="1"/>
        <end position="514"/>
    </location>
</feature>
<feature type="domain" description="CBS 1" evidence="2">
    <location>
        <begin position="114"/>
        <end position="173"/>
    </location>
</feature>
<feature type="domain" description="CBS 2" evidence="2">
    <location>
        <begin position="179"/>
        <end position="237"/>
    </location>
</feature>
<feature type="active site" description="Thioimidate intermediate">
    <location>
        <position position="331"/>
    </location>
</feature>
<feature type="active site" description="Proton acceptor" evidence="2">
    <location>
        <position position="429"/>
    </location>
</feature>
<feature type="binding site" evidence="2">
    <location>
        <begin position="274"/>
        <end position="276"/>
    </location>
    <ligand>
        <name>NAD(+)</name>
        <dbReference type="ChEBI" id="CHEBI:57540"/>
    </ligand>
</feature>
<feature type="binding site" evidence="3 4">
    <location>
        <position position="276"/>
    </location>
    <ligand>
        <name>mycophenolate</name>
        <dbReference type="ChEBI" id="CHEBI:62932"/>
        <note>inhibitor</note>
    </ligand>
</feature>
<feature type="binding site" evidence="2">
    <location>
        <begin position="324"/>
        <end position="326"/>
    </location>
    <ligand>
        <name>NAD(+)</name>
        <dbReference type="ChEBI" id="CHEBI:57540"/>
    </ligand>
</feature>
<feature type="binding site" description="in other chain" evidence="2">
    <location>
        <position position="326"/>
    </location>
    <ligand>
        <name>K(+)</name>
        <dbReference type="ChEBI" id="CHEBI:29103"/>
        <note>ligand shared between two tetrameric partners</note>
    </ligand>
</feature>
<feature type="binding site" evidence="3 4">
    <location>
        <position position="326"/>
    </location>
    <ligand>
        <name>mycophenolate</name>
        <dbReference type="ChEBI" id="CHEBI:62932"/>
        <note>inhibitor</note>
    </ligand>
</feature>
<feature type="binding site" description="in other chain" evidence="2">
    <location>
        <position position="328"/>
    </location>
    <ligand>
        <name>K(+)</name>
        <dbReference type="ChEBI" id="CHEBI:29103"/>
        <note>ligand shared between two tetrameric partners</note>
    </ligand>
</feature>
<feature type="binding site">
    <location>
        <position position="329"/>
    </location>
    <ligand>
        <name>IMP</name>
        <dbReference type="ChEBI" id="CHEBI:58053"/>
    </ligand>
</feature>
<feature type="binding site" description="in other chain" evidence="2">
    <location>
        <position position="331"/>
    </location>
    <ligand>
        <name>K(+)</name>
        <dbReference type="ChEBI" id="CHEBI:29103"/>
        <note>ligand shared between two tetrameric partners</note>
    </ligand>
</feature>
<feature type="binding site" evidence="3 4">
    <location>
        <position position="333"/>
    </location>
    <ligand>
        <name>mycophenolate</name>
        <dbReference type="ChEBI" id="CHEBI:62932"/>
        <note>inhibitor</note>
    </ligand>
</feature>
<feature type="binding site">
    <location>
        <begin position="364"/>
        <end position="366"/>
    </location>
    <ligand>
        <name>IMP</name>
        <dbReference type="ChEBI" id="CHEBI:58053"/>
    </ligand>
</feature>
<feature type="binding site">
    <location>
        <begin position="387"/>
        <end position="388"/>
    </location>
    <ligand>
        <name>IMP</name>
        <dbReference type="ChEBI" id="CHEBI:58053"/>
    </ligand>
</feature>
<feature type="binding site">
    <location>
        <begin position="411"/>
        <end position="415"/>
    </location>
    <ligand>
        <name>IMP</name>
        <dbReference type="ChEBI" id="CHEBI:58053"/>
    </ligand>
</feature>
<feature type="binding site">
    <location>
        <position position="441"/>
    </location>
    <ligand>
        <name>IMP</name>
        <dbReference type="ChEBI" id="CHEBI:58053"/>
    </ligand>
</feature>
<feature type="binding site" evidence="2">
    <location>
        <position position="500"/>
    </location>
    <ligand>
        <name>K(+)</name>
        <dbReference type="ChEBI" id="CHEBI:29103"/>
        <note>ligand shared between two tetrameric partners</note>
    </ligand>
</feature>
<feature type="binding site" evidence="2">
    <location>
        <position position="501"/>
    </location>
    <ligand>
        <name>K(+)</name>
        <dbReference type="ChEBI" id="CHEBI:29103"/>
        <note>ligand shared between two tetrameric partners</note>
    </ligand>
</feature>
<feature type="binding site" evidence="2">
    <location>
        <position position="502"/>
    </location>
    <ligand>
        <name>K(+)</name>
        <dbReference type="ChEBI" id="CHEBI:29103"/>
        <note>ligand shared between two tetrameric partners</note>
    </ligand>
</feature>
<feature type="modified residue" description="Phosphoserine" evidence="1">
    <location>
        <position position="122"/>
    </location>
</feature>
<feature type="modified residue" description="Phosphoserine" evidence="1">
    <location>
        <position position="160"/>
    </location>
</feature>
<feature type="modified residue" description="Phosphotyrosine" evidence="1">
    <location>
        <position position="400"/>
    </location>
</feature>
<feature type="modified residue" description="Phosphoserine" evidence="1">
    <location>
        <position position="416"/>
    </location>
</feature>
<feature type="modified residue" description="N6-acetyllysine" evidence="1">
    <location>
        <position position="511"/>
    </location>
</feature>
<feature type="cross-link" description="Glycyl lysine isopeptide (Lys-Gly) (interchain with G-Cter in SUMO2)" evidence="1">
    <location>
        <position position="195"/>
    </location>
</feature>
<feature type="cross-link" description="Glycyl lysine isopeptide (Lys-Gly) (interchain with G-Cter in SUMO2)" evidence="1">
    <location>
        <position position="208"/>
    </location>
</feature>
<feature type="cross-link" description="Glycyl lysine isopeptide (Lys-Gly) (interchain with G-Cter in SUMO2)" evidence="1">
    <location>
        <position position="438"/>
    </location>
</feature>
<feature type="mutagenesis site" description="No effect." evidence="3">
    <original>S</original>
    <variation>A</variation>
    <location>
        <position position="275"/>
    </location>
</feature>
<feature type="mutagenesis site" description="Increases Ki for MPA 7-fold." evidence="3">
    <original>S</original>
    <variation>A</variation>
    <location>
        <position position="276"/>
    </location>
</feature>
<feature type="mutagenesis site" description="Reduces activity by 87%." evidence="3">
    <original>S</original>
    <variation>A</variation>
    <location>
        <position position="329"/>
    </location>
</feature>
<feature type="mutagenesis site" description="Loss of activity." evidence="3">
    <original>C</original>
    <variation>A</variation>
    <location>
        <position position="331"/>
    </location>
</feature>
<feature type="mutagenesis site" description="Increases Ki for MPA 300-fold." evidence="3">
    <original>T</original>
    <variation>I</variation>
    <location>
        <position position="333"/>
    </location>
</feature>
<feature type="mutagenesis site" description="Loss of activity." evidence="3">
    <original>D</original>
    <variation>A</variation>
    <location>
        <position position="364"/>
    </location>
</feature>
<feature type="mutagenesis site" description="No effect." evidence="3">
    <original>Q</original>
    <variation>A</variation>
    <location>
        <position position="368"/>
    </location>
</feature>
<feature type="mutagenesis site" description="Reduces activity by over 95% and increases Ki for MPA 25-fold." evidence="3">
    <original>Q</original>
    <variation>A</variation>
    <location>
        <position position="441"/>
    </location>
</feature>
<feature type="helix" evidence="5">
    <location>
        <begin position="20"/>
        <end position="23"/>
    </location>
</feature>
<feature type="helix" evidence="5">
    <location>
        <begin position="32"/>
        <end position="34"/>
    </location>
</feature>
<feature type="strand" evidence="5">
    <location>
        <begin position="35"/>
        <end position="37"/>
    </location>
</feature>
<feature type="helix" evidence="5">
    <location>
        <begin position="46"/>
        <end position="48"/>
    </location>
</feature>
<feature type="strand" evidence="5">
    <location>
        <begin position="53"/>
        <end position="58"/>
    </location>
</feature>
<feature type="strand" evidence="5">
    <location>
        <begin position="60"/>
        <end position="63"/>
    </location>
</feature>
<feature type="strand" evidence="5">
    <location>
        <begin position="65"/>
        <end position="67"/>
    </location>
</feature>
<feature type="turn" evidence="5">
    <location>
        <begin position="71"/>
        <end position="73"/>
    </location>
</feature>
<feature type="helix" evidence="5">
    <location>
        <begin position="76"/>
        <end position="85"/>
    </location>
</feature>
<feature type="strand" evidence="5">
    <location>
        <begin position="88"/>
        <end position="91"/>
    </location>
</feature>
<feature type="helix" evidence="5">
    <location>
        <begin position="97"/>
        <end position="108"/>
    </location>
</feature>
<feature type="strand" evidence="5">
    <location>
        <begin position="113"/>
        <end position="115"/>
    </location>
</feature>
<feature type="helix" evidence="5">
    <location>
        <begin position="194"/>
        <end position="200"/>
    </location>
</feature>
<feature type="strand" evidence="5">
    <location>
        <begin position="210"/>
        <end position="213"/>
    </location>
</feature>
<feature type="turn" evidence="5">
    <location>
        <begin position="214"/>
        <end position="216"/>
    </location>
</feature>
<feature type="strand" evidence="5">
    <location>
        <begin position="217"/>
        <end position="222"/>
    </location>
</feature>
<feature type="helix" evidence="5">
    <location>
        <begin position="224"/>
        <end position="232"/>
    </location>
</feature>
<feature type="strand" evidence="5">
    <location>
        <begin position="247"/>
        <end position="250"/>
    </location>
</feature>
<feature type="helix" evidence="5">
    <location>
        <begin position="255"/>
        <end position="266"/>
    </location>
</feature>
<feature type="strand" evidence="5">
    <location>
        <begin position="270"/>
        <end position="273"/>
    </location>
</feature>
<feature type="helix" evidence="5">
    <location>
        <begin position="281"/>
        <end position="293"/>
    </location>
</feature>
<feature type="strand" evidence="5">
    <location>
        <begin position="298"/>
        <end position="304"/>
    </location>
</feature>
<feature type="helix" evidence="5">
    <location>
        <begin position="307"/>
        <end position="316"/>
    </location>
</feature>
<feature type="strand" evidence="5">
    <location>
        <begin position="319"/>
        <end position="323"/>
    </location>
</feature>
<feature type="helix" evidence="5">
    <location>
        <begin position="333"/>
        <end position="337"/>
    </location>
</feature>
<feature type="helix" evidence="5">
    <location>
        <begin position="343"/>
        <end position="354"/>
    </location>
</feature>
<feature type="helix" evidence="5">
    <location>
        <begin position="355"/>
        <end position="357"/>
    </location>
</feature>
<feature type="strand" evidence="5">
    <location>
        <begin position="361"/>
        <end position="365"/>
    </location>
</feature>
<feature type="helix" evidence="5">
    <location>
        <begin position="370"/>
        <end position="378"/>
    </location>
</feature>
<feature type="strand" evidence="5">
    <location>
        <begin position="382"/>
        <end position="387"/>
    </location>
</feature>
<feature type="turn" evidence="5">
    <location>
        <begin position="388"/>
        <end position="392"/>
    </location>
</feature>
<feature type="strand" evidence="5">
    <location>
        <begin position="396"/>
        <end position="398"/>
    </location>
</feature>
<feature type="strand" evidence="5">
    <location>
        <begin position="401"/>
        <end position="405"/>
    </location>
</feature>
<feature type="strand" evidence="5">
    <location>
        <begin position="407"/>
        <end position="412"/>
    </location>
</feature>
<feature type="turn" evidence="5">
    <location>
        <begin position="417"/>
        <end position="419"/>
    </location>
</feature>
<feature type="strand" evidence="5">
    <location>
        <begin position="444"/>
        <end position="448"/>
    </location>
</feature>
<feature type="helix" evidence="5">
    <location>
        <begin position="453"/>
        <end position="470"/>
    </location>
</feature>
<feature type="helix" evidence="5">
    <location>
        <begin position="476"/>
        <end position="485"/>
    </location>
</feature>
<feature type="strand" evidence="5">
    <location>
        <begin position="490"/>
        <end position="492"/>
    </location>
</feature>
<feature type="helix" evidence="5">
    <location>
        <begin position="495"/>
        <end position="501"/>
    </location>
</feature>
<evidence type="ECO:0000250" key="1">
    <source>
        <dbReference type="UniProtKB" id="P12268"/>
    </source>
</evidence>
<evidence type="ECO:0000255" key="2">
    <source>
        <dbReference type="HAMAP-Rule" id="MF_03156"/>
    </source>
</evidence>
<evidence type="ECO:0000269" key="3">
    <source>
    </source>
</evidence>
<evidence type="ECO:0007744" key="4">
    <source>
        <dbReference type="PDB" id="1JR1"/>
    </source>
</evidence>
<evidence type="ECO:0007829" key="5">
    <source>
        <dbReference type="PDB" id="1JR1"/>
    </source>
</evidence>
<accession>P12269</accession>
<accession>G3IB73</accession>
<keyword id="KW-0002">3D-structure</keyword>
<keyword id="KW-0007">Acetylation</keyword>
<keyword id="KW-0129">CBS domain</keyword>
<keyword id="KW-0963">Cytoplasm</keyword>
<keyword id="KW-0903">Direct protein sequencing</keyword>
<keyword id="KW-0332">GMP biosynthesis</keyword>
<keyword id="KW-1017">Isopeptide bond</keyword>
<keyword id="KW-0479">Metal-binding</keyword>
<keyword id="KW-0520">NAD</keyword>
<keyword id="KW-0539">Nucleus</keyword>
<keyword id="KW-0560">Oxidoreductase</keyword>
<keyword id="KW-0597">Phosphoprotein</keyword>
<keyword id="KW-0630">Potassium</keyword>
<keyword id="KW-0658">Purine biosynthesis</keyword>
<keyword id="KW-1185">Reference proteome</keyword>
<keyword id="KW-0677">Repeat</keyword>
<keyword id="KW-0832">Ubl conjugation</keyword>
<organism>
    <name type="scientific">Cricetulus griseus</name>
    <name type="common">Chinese hamster</name>
    <name type="synonym">Cricetulus barabensis griseus</name>
    <dbReference type="NCBI Taxonomy" id="10029"/>
    <lineage>
        <taxon>Eukaryota</taxon>
        <taxon>Metazoa</taxon>
        <taxon>Chordata</taxon>
        <taxon>Craniata</taxon>
        <taxon>Vertebrata</taxon>
        <taxon>Euteleostomi</taxon>
        <taxon>Mammalia</taxon>
        <taxon>Eutheria</taxon>
        <taxon>Euarchontoglires</taxon>
        <taxon>Glires</taxon>
        <taxon>Rodentia</taxon>
        <taxon>Myomorpha</taxon>
        <taxon>Muroidea</taxon>
        <taxon>Cricetidae</taxon>
        <taxon>Cricetinae</taxon>
        <taxon>Cricetulus</taxon>
    </lineage>
</organism>